<organism>
    <name type="scientific">Xanthomonas axonopodis pv. citri (strain 306)</name>
    <dbReference type="NCBI Taxonomy" id="190486"/>
    <lineage>
        <taxon>Bacteria</taxon>
        <taxon>Pseudomonadati</taxon>
        <taxon>Pseudomonadota</taxon>
        <taxon>Gammaproteobacteria</taxon>
        <taxon>Lysobacterales</taxon>
        <taxon>Lysobacteraceae</taxon>
        <taxon>Xanthomonas</taxon>
    </lineage>
</organism>
<sequence length="335" mass="36516">MIQFQRLHKSYSVDGRQIVALHPLDLRIGPGEVFGIIGHSGAGKSTLIRLINRLEEPSGGRLLIGEEDVTALDRQGLRALRRRIGMIFQHFNLLSSRTVAGNVAFPLELAGTPRAEIDARVAELLARVGLQEHANKYPAQLSGGQKQRVGIARALATRPQILLCDEATSALDPQTTASVLQLLAQINRELGLTIVLITHEMDVIRRVCDRVAVLDAGKLVETGPVTEVFLHPKHATTRRFVSEAEHVDEAELHRDFAAVGGRIVRLTFLGNGTYEPVLGRIARETGVDYNILSGRVDRIKDTPYGQLIVALTGGDHNAARAGFVAAGVQVEELRV</sequence>
<dbReference type="EC" id="7.4.2.11" evidence="1"/>
<dbReference type="EMBL" id="AE008923">
    <property type="protein sequence ID" value="AAM38512.1"/>
    <property type="molecule type" value="Genomic_DNA"/>
</dbReference>
<dbReference type="RefSeq" id="WP_005911242.1">
    <property type="nucleotide sequence ID" value="NC_003919.1"/>
</dbReference>
<dbReference type="SMR" id="Q8PGE8"/>
<dbReference type="KEGG" id="xac:XAC3669"/>
<dbReference type="eggNOG" id="COG1135">
    <property type="taxonomic scope" value="Bacteria"/>
</dbReference>
<dbReference type="HOGENOM" id="CLU_000604_1_3_6"/>
<dbReference type="Proteomes" id="UP000000576">
    <property type="component" value="Chromosome"/>
</dbReference>
<dbReference type="GO" id="GO:0005886">
    <property type="term" value="C:plasma membrane"/>
    <property type="evidence" value="ECO:0007669"/>
    <property type="project" value="UniProtKB-SubCell"/>
</dbReference>
<dbReference type="GO" id="GO:0033232">
    <property type="term" value="F:ABC-type D-methionine transporter activity"/>
    <property type="evidence" value="ECO:0007669"/>
    <property type="project" value="UniProtKB-EC"/>
</dbReference>
<dbReference type="GO" id="GO:0005524">
    <property type="term" value="F:ATP binding"/>
    <property type="evidence" value="ECO:0007669"/>
    <property type="project" value="UniProtKB-KW"/>
</dbReference>
<dbReference type="GO" id="GO:0016887">
    <property type="term" value="F:ATP hydrolysis activity"/>
    <property type="evidence" value="ECO:0007669"/>
    <property type="project" value="InterPro"/>
</dbReference>
<dbReference type="CDD" id="cd03258">
    <property type="entry name" value="ABC_MetN_methionine_transporter"/>
    <property type="match status" value="1"/>
</dbReference>
<dbReference type="FunFam" id="3.40.50.300:FF:000056">
    <property type="entry name" value="Cell division ATP-binding protein FtsE"/>
    <property type="match status" value="1"/>
</dbReference>
<dbReference type="Gene3D" id="3.30.70.260">
    <property type="match status" value="1"/>
</dbReference>
<dbReference type="Gene3D" id="3.40.50.300">
    <property type="entry name" value="P-loop containing nucleotide triphosphate hydrolases"/>
    <property type="match status" value="1"/>
</dbReference>
<dbReference type="InterPro" id="IPR003593">
    <property type="entry name" value="AAA+_ATPase"/>
</dbReference>
<dbReference type="InterPro" id="IPR003439">
    <property type="entry name" value="ABC_transporter-like_ATP-bd"/>
</dbReference>
<dbReference type="InterPro" id="IPR017871">
    <property type="entry name" value="ABC_transporter-like_CS"/>
</dbReference>
<dbReference type="InterPro" id="IPR045865">
    <property type="entry name" value="ACT-like_dom_sf"/>
</dbReference>
<dbReference type="InterPro" id="IPR041701">
    <property type="entry name" value="MetN_ABC"/>
</dbReference>
<dbReference type="InterPro" id="IPR050086">
    <property type="entry name" value="MetN_ABC_transporter-like"/>
</dbReference>
<dbReference type="InterPro" id="IPR018449">
    <property type="entry name" value="NIL_domain"/>
</dbReference>
<dbReference type="InterPro" id="IPR027417">
    <property type="entry name" value="P-loop_NTPase"/>
</dbReference>
<dbReference type="PANTHER" id="PTHR43166">
    <property type="entry name" value="AMINO ACID IMPORT ATP-BINDING PROTEIN"/>
    <property type="match status" value="1"/>
</dbReference>
<dbReference type="PANTHER" id="PTHR43166:SF30">
    <property type="entry name" value="METHIONINE IMPORT ATP-BINDING PROTEIN METN"/>
    <property type="match status" value="1"/>
</dbReference>
<dbReference type="Pfam" id="PF00005">
    <property type="entry name" value="ABC_tran"/>
    <property type="match status" value="1"/>
</dbReference>
<dbReference type="Pfam" id="PF09383">
    <property type="entry name" value="NIL"/>
    <property type="match status" value="1"/>
</dbReference>
<dbReference type="SMART" id="SM00382">
    <property type="entry name" value="AAA"/>
    <property type="match status" value="1"/>
</dbReference>
<dbReference type="SMART" id="SM00930">
    <property type="entry name" value="NIL"/>
    <property type="match status" value="1"/>
</dbReference>
<dbReference type="SUPFAM" id="SSF55021">
    <property type="entry name" value="ACT-like"/>
    <property type="match status" value="1"/>
</dbReference>
<dbReference type="SUPFAM" id="SSF52540">
    <property type="entry name" value="P-loop containing nucleoside triphosphate hydrolases"/>
    <property type="match status" value="1"/>
</dbReference>
<dbReference type="PROSITE" id="PS00211">
    <property type="entry name" value="ABC_TRANSPORTER_1"/>
    <property type="match status" value="1"/>
</dbReference>
<dbReference type="PROSITE" id="PS50893">
    <property type="entry name" value="ABC_TRANSPORTER_2"/>
    <property type="match status" value="1"/>
</dbReference>
<dbReference type="PROSITE" id="PS51264">
    <property type="entry name" value="METN"/>
    <property type="match status" value="1"/>
</dbReference>
<keyword id="KW-0029">Amino-acid transport</keyword>
<keyword id="KW-0067">ATP-binding</keyword>
<keyword id="KW-0997">Cell inner membrane</keyword>
<keyword id="KW-1003">Cell membrane</keyword>
<keyword id="KW-0472">Membrane</keyword>
<keyword id="KW-0547">Nucleotide-binding</keyword>
<keyword id="KW-1278">Translocase</keyword>
<keyword id="KW-0813">Transport</keyword>
<reference key="1">
    <citation type="journal article" date="2002" name="Nature">
        <title>Comparison of the genomes of two Xanthomonas pathogens with differing host specificities.</title>
        <authorList>
            <person name="da Silva A.C.R."/>
            <person name="Ferro J.A."/>
            <person name="Reinach F.C."/>
            <person name="Farah C.S."/>
            <person name="Furlan L.R."/>
            <person name="Quaggio R.B."/>
            <person name="Monteiro-Vitorello C.B."/>
            <person name="Van Sluys M.A."/>
            <person name="Almeida N.F. Jr."/>
            <person name="Alves L.M.C."/>
            <person name="do Amaral A.M."/>
            <person name="Bertolini M.C."/>
            <person name="Camargo L.E.A."/>
            <person name="Camarotte G."/>
            <person name="Cannavan F."/>
            <person name="Cardozo J."/>
            <person name="Chambergo F."/>
            <person name="Ciapina L.P."/>
            <person name="Cicarelli R.M.B."/>
            <person name="Coutinho L.L."/>
            <person name="Cursino-Santos J.R."/>
            <person name="El-Dorry H."/>
            <person name="Faria J.B."/>
            <person name="Ferreira A.J.S."/>
            <person name="Ferreira R.C.C."/>
            <person name="Ferro M.I.T."/>
            <person name="Formighieri E.F."/>
            <person name="Franco M.C."/>
            <person name="Greggio C.C."/>
            <person name="Gruber A."/>
            <person name="Katsuyama A.M."/>
            <person name="Kishi L.T."/>
            <person name="Leite R.P."/>
            <person name="Lemos E.G.M."/>
            <person name="Lemos M.V.F."/>
            <person name="Locali E.C."/>
            <person name="Machado M.A."/>
            <person name="Madeira A.M.B.N."/>
            <person name="Martinez-Rossi N.M."/>
            <person name="Martins E.C."/>
            <person name="Meidanis J."/>
            <person name="Menck C.F.M."/>
            <person name="Miyaki C.Y."/>
            <person name="Moon D.H."/>
            <person name="Moreira L.M."/>
            <person name="Novo M.T.M."/>
            <person name="Okura V.K."/>
            <person name="Oliveira M.C."/>
            <person name="Oliveira V.R."/>
            <person name="Pereira H.A."/>
            <person name="Rossi A."/>
            <person name="Sena J.A.D."/>
            <person name="Silva C."/>
            <person name="de Souza R.F."/>
            <person name="Spinola L.A.F."/>
            <person name="Takita M.A."/>
            <person name="Tamura R.E."/>
            <person name="Teixeira E.C."/>
            <person name="Tezza R.I.D."/>
            <person name="Trindade dos Santos M."/>
            <person name="Truffi D."/>
            <person name="Tsai S.M."/>
            <person name="White F.F."/>
            <person name="Setubal J.C."/>
            <person name="Kitajima J.P."/>
        </authorList>
    </citation>
    <scope>NUCLEOTIDE SEQUENCE [LARGE SCALE GENOMIC DNA]</scope>
    <source>
        <strain>306</strain>
    </source>
</reference>
<comment type="function">
    <text evidence="1">Part of the ABC transporter complex MetNIQ involved in methionine import. Responsible for energy coupling to the transport system.</text>
</comment>
<comment type="catalytic activity">
    <reaction evidence="1">
        <text>L-methionine(out) + ATP + H2O = L-methionine(in) + ADP + phosphate + H(+)</text>
        <dbReference type="Rhea" id="RHEA:29779"/>
        <dbReference type="ChEBI" id="CHEBI:15377"/>
        <dbReference type="ChEBI" id="CHEBI:15378"/>
        <dbReference type="ChEBI" id="CHEBI:30616"/>
        <dbReference type="ChEBI" id="CHEBI:43474"/>
        <dbReference type="ChEBI" id="CHEBI:57844"/>
        <dbReference type="ChEBI" id="CHEBI:456216"/>
        <dbReference type="EC" id="7.4.2.11"/>
    </reaction>
</comment>
<comment type="catalytic activity">
    <reaction evidence="1">
        <text>D-methionine(out) + ATP + H2O = D-methionine(in) + ADP + phosphate + H(+)</text>
        <dbReference type="Rhea" id="RHEA:29767"/>
        <dbReference type="ChEBI" id="CHEBI:15377"/>
        <dbReference type="ChEBI" id="CHEBI:15378"/>
        <dbReference type="ChEBI" id="CHEBI:30616"/>
        <dbReference type="ChEBI" id="CHEBI:43474"/>
        <dbReference type="ChEBI" id="CHEBI:57932"/>
        <dbReference type="ChEBI" id="CHEBI:456216"/>
        <dbReference type="EC" id="7.4.2.11"/>
    </reaction>
</comment>
<comment type="subunit">
    <text evidence="1">The complex is composed of two ATP-binding proteins (MetN), two transmembrane proteins (MetI) and a solute-binding protein (MetQ).</text>
</comment>
<comment type="subcellular location">
    <subcellularLocation>
        <location evidence="1">Cell inner membrane</location>
        <topology evidence="1">Peripheral membrane protein</topology>
    </subcellularLocation>
</comment>
<comment type="similarity">
    <text evidence="1">Belongs to the ABC transporter superfamily. Methionine importer (TC 3.A.1.24) family.</text>
</comment>
<name>METN_XANAC</name>
<accession>Q8PGE8</accession>
<protein>
    <recommendedName>
        <fullName evidence="1">Methionine import ATP-binding protein MetN</fullName>
        <ecNumber evidence="1">7.4.2.11</ecNumber>
    </recommendedName>
</protein>
<evidence type="ECO:0000255" key="1">
    <source>
        <dbReference type="HAMAP-Rule" id="MF_01719"/>
    </source>
</evidence>
<gene>
    <name evidence="1" type="primary">metN</name>
    <name type="ordered locus">XAC3669</name>
</gene>
<feature type="chain" id="PRO_0000270439" description="Methionine import ATP-binding protein MetN">
    <location>
        <begin position="1"/>
        <end position="335"/>
    </location>
</feature>
<feature type="domain" description="ABC transporter" evidence="1">
    <location>
        <begin position="2"/>
        <end position="241"/>
    </location>
</feature>
<feature type="binding site" evidence="1">
    <location>
        <begin position="38"/>
        <end position="45"/>
    </location>
    <ligand>
        <name>ATP</name>
        <dbReference type="ChEBI" id="CHEBI:30616"/>
    </ligand>
</feature>
<proteinExistence type="inferred from homology"/>